<reference key="1">
    <citation type="journal article" date="2009" name="Appl. Environ. Microbiol.">
        <title>Metabolic versatility and indigenous origin of the archaeon Thermococcus sibiricus, isolated from a siberian oil reservoir, as revealed by genome analysis.</title>
        <authorList>
            <person name="Mardanov A.V."/>
            <person name="Ravin N.V."/>
            <person name="Svetlitchnyi V.A."/>
            <person name="Beletsky A.V."/>
            <person name="Miroshnichenko M.L."/>
            <person name="Bonch-Osmolovskaya E.A."/>
            <person name="Skryabin K.G."/>
        </authorList>
    </citation>
    <scope>NUCLEOTIDE SEQUENCE [LARGE SCALE GENOMIC DNA]</scope>
    <source>
        <strain>DSM 12597 / MM 739</strain>
    </source>
</reference>
<dbReference type="EC" id="3.5.2.9" evidence="1"/>
<dbReference type="EMBL" id="CP001463">
    <property type="protein sequence ID" value="ACS89793.1"/>
    <property type="molecule type" value="Genomic_DNA"/>
</dbReference>
<dbReference type="RefSeq" id="WP_015849013.1">
    <property type="nucleotide sequence ID" value="NC_012883.1"/>
</dbReference>
<dbReference type="SMR" id="C6A2E8"/>
<dbReference type="STRING" id="604354.TSIB_0730"/>
<dbReference type="GeneID" id="8095719"/>
<dbReference type="KEGG" id="tsi:TSIB_0730"/>
<dbReference type="eggNOG" id="arCOG05810">
    <property type="taxonomic scope" value="Archaea"/>
</dbReference>
<dbReference type="HOGENOM" id="CLU_069535_0_0_2"/>
<dbReference type="OrthoDB" id="84497at2157"/>
<dbReference type="Proteomes" id="UP000009079">
    <property type="component" value="Chromosome"/>
</dbReference>
<dbReference type="GO" id="GO:0017168">
    <property type="term" value="F:5-oxoprolinase (ATP-hydrolyzing) activity"/>
    <property type="evidence" value="ECO:0007669"/>
    <property type="project" value="UniProtKB-UniRule"/>
</dbReference>
<dbReference type="GO" id="GO:0005524">
    <property type="term" value="F:ATP binding"/>
    <property type="evidence" value="ECO:0007669"/>
    <property type="project" value="UniProtKB-UniRule"/>
</dbReference>
<dbReference type="GO" id="GO:0005975">
    <property type="term" value="P:carbohydrate metabolic process"/>
    <property type="evidence" value="ECO:0007669"/>
    <property type="project" value="InterPro"/>
</dbReference>
<dbReference type="CDD" id="cd10787">
    <property type="entry name" value="LamB_YcsF_like"/>
    <property type="match status" value="1"/>
</dbReference>
<dbReference type="Gene3D" id="3.20.20.370">
    <property type="entry name" value="Glycoside hydrolase/deacetylase"/>
    <property type="match status" value="1"/>
</dbReference>
<dbReference type="HAMAP" id="MF_00691">
    <property type="entry name" value="PxpA"/>
    <property type="match status" value="1"/>
</dbReference>
<dbReference type="InterPro" id="IPR011330">
    <property type="entry name" value="Glyco_hydro/deAcase_b/a-brl"/>
</dbReference>
<dbReference type="InterPro" id="IPR005501">
    <property type="entry name" value="LamB/YcsF/PxpA-like"/>
</dbReference>
<dbReference type="NCBIfam" id="NF003814">
    <property type="entry name" value="PRK05406.1-3"/>
    <property type="match status" value="1"/>
</dbReference>
<dbReference type="NCBIfam" id="NF003816">
    <property type="entry name" value="PRK05406.1-5"/>
    <property type="match status" value="1"/>
</dbReference>
<dbReference type="PANTHER" id="PTHR30292:SF0">
    <property type="entry name" value="5-OXOPROLINASE SUBUNIT A"/>
    <property type="match status" value="1"/>
</dbReference>
<dbReference type="PANTHER" id="PTHR30292">
    <property type="entry name" value="UNCHARACTERIZED PROTEIN YBGL-RELATED"/>
    <property type="match status" value="1"/>
</dbReference>
<dbReference type="Pfam" id="PF03746">
    <property type="entry name" value="LamB_YcsF"/>
    <property type="match status" value="1"/>
</dbReference>
<dbReference type="SUPFAM" id="SSF88713">
    <property type="entry name" value="Glycoside hydrolase/deacetylase"/>
    <property type="match status" value="1"/>
</dbReference>
<gene>
    <name evidence="1" type="primary">pxpA</name>
    <name type="ordered locus">TSIB_0730</name>
</gene>
<name>PXPA_THESM</name>
<feature type="chain" id="PRO_1000212585" description="5-oxoprolinase subunit A">
    <location>
        <begin position="1"/>
        <end position="255"/>
    </location>
</feature>
<organism>
    <name type="scientific">Thermococcus sibiricus (strain DSM 12597 / MM 739)</name>
    <dbReference type="NCBI Taxonomy" id="604354"/>
    <lineage>
        <taxon>Archaea</taxon>
        <taxon>Methanobacteriati</taxon>
        <taxon>Methanobacteriota</taxon>
        <taxon>Thermococci</taxon>
        <taxon>Thermococcales</taxon>
        <taxon>Thermococcaceae</taxon>
        <taxon>Thermococcus</taxon>
    </lineage>
</organism>
<sequence length="255" mass="28520">MKIDLNSDLGESFGRYKLGLDEEVMKYITSANIACGWHAGDPLIMRKTVKLAKDMNVEVGAHPGYPDLMGFGRRYMDLTKEEARNYILYQIGALYAFVKAEGLTLQHVKPHGALYNALVRDEELTIGVLEGIADFDKNIIFVGLSMSKPLEIAEEMGLKVAHEVFADRAYNPDGTLVSRRKPGAVIHNKEEIAERVISMVKDGGVKSINGEWVELRADTICVHGDNPKAVEITAYLRKRLEEEGIKIVSMRELIR</sequence>
<accession>C6A2E8</accession>
<keyword id="KW-0067">ATP-binding</keyword>
<keyword id="KW-0378">Hydrolase</keyword>
<keyword id="KW-0547">Nucleotide-binding</keyword>
<keyword id="KW-1185">Reference proteome</keyword>
<evidence type="ECO:0000255" key="1">
    <source>
        <dbReference type="HAMAP-Rule" id="MF_00691"/>
    </source>
</evidence>
<protein>
    <recommendedName>
        <fullName evidence="1">5-oxoprolinase subunit A</fullName>
        <shortName evidence="1">5-OPase subunit A</shortName>
        <ecNumber evidence="1">3.5.2.9</ecNumber>
    </recommendedName>
    <alternativeName>
        <fullName evidence="1">5-oxoprolinase (ATP-hydrolyzing) subunit A</fullName>
    </alternativeName>
</protein>
<proteinExistence type="inferred from homology"/>
<comment type="function">
    <text evidence="1">Catalyzes the cleavage of 5-oxoproline to form L-glutamate coupled to the hydrolysis of ATP to ADP and inorganic phosphate.</text>
</comment>
<comment type="catalytic activity">
    <reaction evidence="1">
        <text>5-oxo-L-proline + ATP + 2 H2O = L-glutamate + ADP + phosphate + H(+)</text>
        <dbReference type="Rhea" id="RHEA:10348"/>
        <dbReference type="ChEBI" id="CHEBI:15377"/>
        <dbReference type="ChEBI" id="CHEBI:15378"/>
        <dbReference type="ChEBI" id="CHEBI:29985"/>
        <dbReference type="ChEBI" id="CHEBI:30616"/>
        <dbReference type="ChEBI" id="CHEBI:43474"/>
        <dbReference type="ChEBI" id="CHEBI:58402"/>
        <dbReference type="ChEBI" id="CHEBI:456216"/>
        <dbReference type="EC" id="3.5.2.9"/>
    </reaction>
</comment>
<comment type="subunit">
    <text evidence="1">Forms a complex composed of PxpA, PxpB and PxpC.</text>
</comment>
<comment type="similarity">
    <text evidence="1">Belongs to the LamB/PxpA family.</text>
</comment>